<proteinExistence type="inferred from homology"/>
<organism>
    <name type="scientific">Emericella nidulans (strain FGSC A4 / ATCC 38163 / CBS 112.46 / NRRL 194 / M139)</name>
    <name type="common">Aspergillus nidulans</name>
    <dbReference type="NCBI Taxonomy" id="227321"/>
    <lineage>
        <taxon>Eukaryota</taxon>
        <taxon>Fungi</taxon>
        <taxon>Dikarya</taxon>
        <taxon>Ascomycota</taxon>
        <taxon>Pezizomycotina</taxon>
        <taxon>Eurotiomycetes</taxon>
        <taxon>Eurotiomycetidae</taxon>
        <taxon>Eurotiales</taxon>
        <taxon>Aspergillaceae</taxon>
        <taxon>Aspergillus</taxon>
        <taxon>Aspergillus subgen. Nidulantes</taxon>
    </lineage>
</organism>
<comment type="function">
    <text evidence="1">Interacts with eme1 to form a DNA structure-specific endonuclease with substrate preference for branched DNA structures with a 5'-end at the branch nick. Typical substrates include 3'-flap structures, D-loops, replication forks and nicked Holliday junctions. May be required in mitosis for the processing of stalled or collapsed replication fork intermediates. May be required in meiosis for the repair of meiosis-specific double strand breaks subsequent to single-end invasion (SEI) (By similarity).</text>
</comment>
<comment type="cofactor">
    <cofactor evidence="1">
        <name>Mg(2+)</name>
        <dbReference type="ChEBI" id="CHEBI:18420"/>
    </cofactor>
</comment>
<comment type="subunit">
    <text evidence="1">Interacts with eme1.</text>
</comment>
<comment type="subcellular location">
    <subcellularLocation>
        <location evidence="1">Nucleus</location>
    </subcellularLocation>
</comment>
<comment type="similarity">
    <text evidence="3">Belongs to the XPF family.</text>
</comment>
<accession>Q5B8L2</accession>
<accession>C8VIK2</accession>
<sequence length="677" mass="76241">MKYVNHKTIVAFLPEIGKAGSHVTSRPNLEARVDRDSHGATKLFLSSICRVMAAKETQAERGLISSCFNLALGWQLSNAMSDDTCANPLLLGWIKEWLDQARERNTKGVTVYKKAYESMKACPLTFQHPSEAQQLNGLGPKLCERLTNKLKEYCKEHGLPMPEDPRTAKADKRKSTDGDTEGQPAKKARKPKPYAPALRSGPFALILALSSLDENSNQSMTKAELIEKAQPYCDSSFTVPSDPTKFFTAWNSMKILLTKELVYTRGHPLKKYSLTEEGWEVAKAIKKTAQKSIQNTLPFDVQSDVTADEPRTAQREDLASQRDFERQIRPGLQAHNSQRHTLDSLENTLDNSTITPIPISPDNFTVQLILDTREVRTSKDRDYISNELIRKGITPEVRALEVGDTMWVAKFHDPTFLRKYGEEGDEIMLDWIVERKRLDDLIGSIKDGRFHEQKFRLRRSGIKNVIYLIEEFAVTHHESNAAAAQKYHDMVASAIAQTQVVNGYFVKRTKNLDDTIRYLARMTFLLRNMYSAPSPPSSRTSARPSHTLALLPTRHLALSSSHISALNTLRAENPHVTYGVTFPTFCAIASKSDALTLRDIFLKMLMCTKGVSGDKALEIQRVWPTPQAFIRAFEELTDPKQKENMVADRMAHVMVGRKKIAKVLSRKIAEVWGGLPG</sequence>
<evidence type="ECO:0000250" key="1"/>
<evidence type="ECO:0000256" key="2">
    <source>
        <dbReference type="SAM" id="MobiDB-lite"/>
    </source>
</evidence>
<evidence type="ECO:0000305" key="3"/>
<reference key="1">
    <citation type="journal article" date="2005" name="Nature">
        <title>Sequencing of Aspergillus nidulans and comparative analysis with A. fumigatus and A. oryzae.</title>
        <authorList>
            <person name="Galagan J.E."/>
            <person name="Calvo S.E."/>
            <person name="Cuomo C."/>
            <person name="Ma L.-J."/>
            <person name="Wortman J.R."/>
            <person name="Batzoglou S."/>
            <person name="Lee S.-I."/>
            <person name="Bastuerkmen M."/>
            <person name="Spevak C.C."/>
            <person name="Clutterbuck J."/>
            <person name="Kapitonov V."/>
            <person name="Jurka J."/>
            <person name="Scazzocchio C."/>
            <person name="Farman M.L."/>
            <person name="Butler J."/>
            <person name="Purcell S."/>
            <person name="Harris S."/>
            <person name="Braus G.H."/>
            <person name="Draht O."/>
            <person name="Busch S."/>
            <person name="D'Enfert C."/>
            <person name="Bouchier C."/>
            <person name="Goldman G.H."/>
            <person name="Bell-Pedersen D."/>
            <person name="Griffiths-Jones S."/>
            <person name="Doonan J.H."/>
            <person name="Yu J."/>
            <person name="Vienken K."/>
            <person name="Pain A."/>
            <person name="Freitag M."/>
            <person name="Selker E.U."/>
            <person name="Archer D.B."/>
            <person name="Penalva M.A."/>
            <person name="Oakley B.R."/>
            <person name="Momany M."/>
            <person name="Tanaka T."/>
            <person name="Kumagai T."/>
            <person name="Asai K."/>
            <person name="Machida M."/>
            <person name="Nierman W.C."/>
            <person name="Denning D.W."/>
            <person name="Caddick M.X."/>
            <person name="Hynes M."/>
            <person name="Paoletti M."/>
            <person name="Fischer R."/>
            <person name="Miller B.L."/>
            <person name="Dyer P.S."/>
            <person name="Sachs M.S."/>
            <person name="Osmani S.A."/>
            <person name="Birren B.W."/>
        </authorList>
    </citation>
    <scope>NUCLEOTIDE SEQUENCE [LARGE SCALE GENOMIC DNA]</scope>
    <source>
        <strain>FGSC A4 / ATCC 38163 / CBS 112.46 / NRRL 194 / M139</strain>
    </source>
</reference>
<reference key="2">
    <citation type="journal article" date="2009" name="Fungal Genet. Biol.">
        <title>The 2008 update of the Aspergillus nidulans genome annotation: a community effort.</title>
        <authorList>
            <person name="Wortman J.R."/>
            <person name="Gilsenan J.M."/>
            <person name="Joardar V."/>
            <person name="Deegan J."/>
            <person name="Clutterbuck J."/>
            <person name="Andersen M.R."/>
            <person name="Archer D."/>
            <person name="Bencina M."/>
            <person name="Braus G."/>
            <person name="Coutinho P."/>
            <person name="von Dohren H."/>
            <person name="Doonan J."/>
            <person name="Driessen A.J."/>
            <person name="Durek P."/>
            <person name="Espeso E."/>
            <person name="Fekete E."/>
            <person name="Flipphi M."/>
            <person name="Estrada C.G."/>
            <person name="Geysens S."/>
            <person name="Goldman G."/>
            <person name="de Groot P.W."/>
            <person name="Hansen K."/>
            <person name="Harris S.D."/>
            <person name="Heinekamp T."/>
            <person name="Helmstaedt K."/>
            <person name="Henrissat B."/>
            <person name="Hofmann G."/>
            <person name="Homan T."/>
            <person name="Horio T."/>
            <person name="Horiuchi H."/>
            <person name="James S."/>
            <person name="Jones M."/>
            <person name="Karaffa L."/>
            <person name="Karanyi Z."/>
            <person name="Kato M."/>
            <person name="Keller N."/>
            <person name="Kelly D.E."/>
            <person name="Kiel J.A."/>
            <person name="Kim J.M."/>
            <person name="van der Klei I.J."/>
            <person name="Klis F.M."/>
            <person name="Kovalchuk A."/>
            <person name="Krasevec N."/>
            <person name="Kubicek C.P."/>
            <person name="Liu B."/>
            <person name="Maccabe A."/>
            <person name="Meyer V."/>
            <person name="Mirabito P."/>
            <person name="Miskei M."/>
            <person name="Mos M."/>
            <person name="Mullins J."/>
            <person name="Nelson D.R."/>
            <person name="Nielsen J."/>
            <person name="Oakley B.R."/>
            <person name="Osmani S.A."/>
            <person name="Pakula T."/>
            <person name="Paszewski A."/>
            <person name="Paulsen I."/>
            <person name="Pilsyk S."/>
            <person name="Pocsi I."/>
            <person name="Punt P.J."/>
            <person name="Ram A.F."/>
            <person name="Ren Q."/>
            <person name="Robellet X."/>
            <person name="Robson G."/>
            <person name="Seiboth B."/>
            <person name="van Solingen P."/>
            <person name="Specht T."/>
            <person name="Sun J."/>
            <person name="Taheri-Talesh N."/>
            <person name="Takeshita N."/>
            <person name="Ussery D."/>
            <person name="vanKuyk P.A."/>
            <person name="Visser H."/>
            <person name="van de Vondervoort P.J."/>
            <person name="de Vries R.P."/>
            <person name="Walton J."/>
            <person name="Xiang X."/>
            <person name="Xiong Y."/>
            <person name="Zeng A.P."/>
            <person name="Brandt B.W."/>
            <person name="Cornell M.J."/>
            <person name="van den Hondel C.A."/>
            <person name="Visser J."/>
            <person name="Oliver S.G."/>
            <person name="Turner G."/>
        </authorList>
    </citation>
    <scope>GENOME REANNOTATION</scope>
    <source>
        <strain>FGSC A4 / ATCC 38163 / CBS 112.46 / NRRL 194 / M139</strain>
    </source>
</reference>
<keyword id="KW-0227">DNA damage</keyword>
<keyword id="KW-0233">DNA recombination</keyword>
<keyword id="KW-0234">DNA repair</keyword>
<keyword id="KW-0255">Endonuclease</keyword>
<keyword id="KW-0378">Hydrolase</keyword>
<keyword id="KW-0460">Magnesium</keyword>
<keyword id="KW-0469">Meiosis</keyword>
<keyword id="KW-0479">Metal-binding</keyword>
<keyword id="KW-0540">Nuclease</keyword>
<keyword id="KW-0539">Nucleus</keyword>
<keyword id="KW-1185">Reference proteome</keyword>
<protein>
    <recommendedName>
        <fullName>Crossover junction endonuclease mus81</fullName>
        <ecNumber>3.1.22.-</ecNumber>
    </recommendedName>
</protein>
<name>MUS81_EMENI</name>
<feature type="chain" id="PRO_0000223643" description="Crossover junction endonuclease mus81">
    <location>
        <begin position="1"/>
        <end position="677"/>
    </location>
</feature>
<feature type="domain" description="ERCC4">
    <location>
        <begin position="367"/>
        <end position="473"/>
    </location>
</feature>
<feature type="region of interest" description="Disordered" evidence="2">
    <location>
        <begin position="156"/>
        <end position="196"/>
    </location>
</feature>
<feature type="compositionally biased region" description="Basic and acidic residues" evidence="2">
    <location>
        <begin position="156"/>
        <end position="177"/>
    </location>
</feature>
<gene>
    <name type="primary">mus81</name>
    <name type="ORF">AN3118</name>
</gene>
<dbReference type="EC" id="3.1.22.-"/>
<dbReference type="EMBL" id="AACD01000051">
    <property type="protein sequence ID" value="EAA63689.1"/>
    <property type="molecule type" value="Genomic_DNA"/>
</dbReference>
<dbReference type="EMBL" id="BN001306">
    <property type="protein sequence ID" value="CBF83374.1"/>
    <property type="molecule type" value="Genomic_DNA"/>
</dbReference>
<dbReference type="RefSeq" id="XP_660722.1">
    <property type="nucleotide sequence ID" value="XM_655630.1"/>
</dbReference>
<dbReference type="SMR" id="Q5B8L2"/>
<dbReference type="FunCoup" id="Q5B8L2">
    <property type="interactions" value="179"/>
</dbReference>
<dbReference type="STRING" id="227321.Q5B8L2"/>
<dbReference type="EnsemblFungi" id="CBF83374">
    <property type="protein sequence ID" value="CBF83374"/>
    <property type="gene ID" value="ANIA_03118"/>
</dbReference>
<dbReference type="KEGG" id="ani:ANIA_03118"/>
<dbReference type="eggNOG" id="KOG2379">
    <property type="taxonomic scope" value="Eukaryota"/>
</dbReference>
<dbReference type="HOGENOM" id="CLU_014329_1_0_1"/>
<dbReference type="InParanoid" id="Q5B8L2"/>
<dbReference type="OMA" id="ELGDAMW"/>
<dbReference type="OrthoDB" id="5963188at2759"/>
<dbReference type="Proteomes" id="UP000000560">
    <property type="component" value="Chromosome VI"/>
</dbReference>
<dbReference type="GO" id="GO:0048476">
    <property type="term" value="C:Holliday junction resolvase complex"/>
    <property type="evidence" value="ECO:0000318"/>
    <property type="project" value="GO_Central"/>
</dbReference>
<dbReference type="GO" id="GO:0005634">
    <property type="term" value="C:nucleus"/>
    <property type="evidence" value="ECO:0000318"/>
    <property type="project" value="GO_Central"/>
</dbReference>
<dbReference type="GO" id="GO:0048257">
    <property type="term" value="F:3'-flap endonuclease activity"/>
    <property type="evidence" value="ECO:0000318"/>
    <property type="project" value="GO_Central"/>
</dbReference>
<dbReference type="GO" id="GO:0008821">
    <property type="term" value="F:crossover junction DNA endonuclease activity"/>
    <property type="evidence" value="ECO:0007669"/>
    <property type="project" value="InterPro"/>
</dbReference>
<dbReference type="GO" id="GO:0003677">
    <property type="term" value="F:DNA binding"/>
    <property type="evidence" value="ECO:0007669"/>
    <property type="project" value="InterPro"/>
</dbReference>
<dbReference type="GO" id="GO:0046872">
    <property type="term" value="F:metal ion binding"/>
    <property type="evidence" value="ECO:0007669"/>
    <property type="project" value="UniProtKB-KW"/>
</dbReference>
<dbReference type="GO" id="GO:0006308">
    <property type="term" value="P:DNA catabolic process"/>
    <property type="evidence" value="ECO:0007669"/>
    <property type="project" value="InterPro"/>
</dbReference>
<dbReference type="GO" id="GO:0000727">
    <property type="term" value="P:double-strand break repair via break-induced replication"/>
    <property type="evidence" value="ECO:0000318"/>
    <property type="project" value="GO_Central"/>
</dbReference>
<dbReference type="GO" id="GO:0031573">
    <property type="term" value="P:mitotic intra-S DNA damage checkpoint signaling"/>
    <property type="evidence" value="ECO:0000318"/>
    <property type="project" value="GO_Central"/>
</dbReference>
<dbReference type="GO" id="GO:0000712">
    <property type="term" value="P:resolution of meiotic recombination intermediates"/>
    <property type="evidence" value="ECO:0000318"/>
    <property type="project" value="GO_Central"/>
</dbReference>
<dbReference type="CDD" id="cd21036">
    <property type="entry name" value="WH_MUS81"/>
    <property type="match status" value="1"/>
</dbReference>
<dbReference type="CDD" id="cd20074">
    <property type="entry name" value="XPF_nuclease_Mus81"/>
    <property type="match status" value="1"/>
</dbReference>
<dbReference type="FunFam" id="1.10.10.10:FF:000307">
    <property type="entry name" value="Crossover junction endonuclease MUS81"/>
    <property type="match status" value="1"/>
</dbReference>
<dbReference type="FunFam" id="3.40.50.10130:FF:000003">
    <property type="entry name" value="Crossover junction endonuclease MUS81"/>
    <property type="match status" value="1"/>
</dbReference>
<dbReference type="FunFam" id="1.10.150.670:FF:000006">
    <property type="entry name" value="Crossover junction endonuclease mus81"/>
    <property type="match status" value="1"/>
</dbReference>
<dbReference type="FunFam" id="1.10.150.110:FF:000001">
    <property type="entry name" value="Putative Crossover junction endonuclease MUS81"/>
    <property type="match status" value="1"/>
</dbReference>
<dbReference type="Gene3D" id="3.40.50.10130">
    <property type="match status" value="1"/>
</dbReference>
<dbReference type="Gene3D" id="1.10.150.670">
    <property type="entry name" value="Crossover junction endonuclease EME1, DNA-binding domain"/>
    <property type="match status" value="1"/>
</dbReference>
<dbReference type="Gene3D" id="1.10.150.110">
    <property type="entry name" value="DNA polymerase beta, N-terminal domain-like"/>
    <property type="match status" value="1"/>
</dbReference>
<dbReference type="Gene3D" id="1.10.10.10">
    <property type="entry name" value="Winged helix-like DNA-binding domain superfamily/Winged helix DNA-binding domain"/>
    <property type="match status" value="1"/>
</dbReference>
<dbReference type="InterPro" id="IPR027421">
    <property type="entry name" value="DNA_pol_lamdba_lyase_dom_sf"/>
</dbReference>
<dbReference type="InterPro" id="IPR018247">
    <property type="entry name" value="EF_Hand_1_Ca_BS"/>
</dbReference>
<dbReference type="InterPro" id="IPR042530">
    <property type="entry name" value="EME1/EME2_C"/>
</dbReference>
<dbReference type="InterPro" id="IPR006166">
    <property type="entry name" value="ERCC4_domain"/>
</dbReference>
<dbReference type="InterPro" id="IPR033309">
    <property type="entry name" value="Mus81"/>
</dbReference>
<dbReference type="InterPro" id="IPR011335">
    <property type="entry name" value="Restrct_endonuc-II-like"/>
</dbReference>
<dbReference type="InterPro" id="IPR036388">
    <property type="entry name" value="WH-like_DNA-bd_sf"/>
</dbReference>
<dbReference type="InterPro" id="IPR047417">
    <property type="entry name" value="WH_MUS81"/>
</dbReference>
<dbReference type="InterPro" id="IPR047416">
    <property type="entry name" value="XPF_nuclease_Mus81"/>
</dbReference>
<dbReference type="PANTHER" id="PTHR13451">
    <property type="entry name" value="CLASS II CROSSOVER JUNCTION ENDONUCLEASE MUS81"/>
    <property type="match status" value="1"/>
</dbReference>
<dbReference type="PANTHER" id="PTHR13451:SF0">
    <property type="entry name" value="CROSSOVER JUNCTION ENDONUCLEASE MUS81"/>
    <property type="match status" value="1"/>
</dbReference>
<dbReference type="Pfam" id="PF02732">
    <property type="entry name" value="ERCC4"/>
    <property type="match status" value="1"/>
</dbReference>
<dbReference type="Pfam" id="PF21136">
    <property type="entry name" value="MUS81-like_WH"/>
    <property type="match status" value="1"/>
</dbReference>
<dbReference type="SMART" id="SM00891">
    <property type="entry name" value="ERCC4"/>
    <property type="match status" value="1"/>
</dbReference>
<dbReference type="SUPFAM" id="SSF47802">
    <property type="entry name" value="DNA polymerase beta, N-terminal domain-like"/>
    <property type="match status" value="1"/>
</dbReference>
<dbReference type="SUPFAM" id="SSF52980">
    <property type="entry name" value="Restriction endonuclease-like"/>
    <property type="match status" value="1"/>
</dbReference>